<name>LPOA_EDWI9</name>
<proteinExistence type="inferred from homology"/>
<sequence length="682" mass="72557">MLSSITVRTKSGRLIPLVLAATLLAACSGRISTTPPAPVQSEATASADYYLQQMQQSSDDSKADWQLLAIRALLREGKLPQADDLLGQLPSQLTEAQQLEQRLVSAELEIARHAPQQAQAILSKLDISLLSQAQQLRYYQAVIAAVQGKTTLAQIRAYIALQPLLTQENQRKSNIDATWTALNTLTPADLNSMVINANEDILRGWLDLLRLYQDNRQDPALLKAAIKEWQTRYPNNPAATMLPSALDNILHLQSDSTASIALLLPLNGQAKVFSDAIEAGFNAAKNGAFNQNSAAVTTDGTPTAQVDAPAQPDVNAAGAVSTSTQSADATASVLPADSAALPPLDAAGDPIAPSVSPGNPDAHIQVYDTSSQPLPELLSQAQQAGVSLVIGPLLKNNVDQLNTISTPLNILALNQPEQVQNHPNICYFALSPEDEARDAARHIWAQGKRTPLLLIPRNPLGDRVAKAFATEWQSLGGGSVLRQTFGSSAELRSTINSGTGIRLTGQPVSITPAQPTSVTIAGLTIPAPVQPPVASGGGVDAVYIIATPAEITLIKPMIDLANGTHNGISLYASSRSYQAGAGPDFRLEMEGVQFSDIPLLAGSDPAILQQAPAQYRNDYSLMRLYAMGADAWTLANHFAQLRQIPGFQVQGATGTLSASDNCVIQRKLPWLQYQKGSIVPVL</sequence>
<organism>
    <name type="scientific">Edwardsiella ictaluri (strain 93-146)</name>
    <dbReference type="NCBI Taxonomy" id="634503"/>
    <lineage>
        <taxon>Bacteria</taxon>
        <taxon>Pseudomonadati</taxon>
        <taxon>Pseudomonadota</taxon>
        <taxon>Gammaproteobacteria</taxon>
        <taxon>Enterobacterales</taxon>
        <taxon>Hafniaceae</taxon>
        <taxon>Edwardsiella</taxon>
    </lineage>
</organism>
<dbReference type="EMBL" id="CP001600">
    <property type="protein sequence ID" value="ACR67842.2"/>
    <property type="molecule type" value="Genomic_DNA"/>
</dbReference>
<dbReference type="RefSeq" id="WP_015870039.1">
    <property type="nucleotide sequence ID" value="NZ_CP169062.1"/>
</dbReference>
<dbReference type="SMR" id="C5B768"/>
<dbReference type="STRING" id="67780.B6E78_13765"/>
<dbReference type="KEGG" id="eic:NT01EI_0614"/>
<dbReference type="PATRIC" id="fig|634503.3.peg.557"/>
<dbReference type="HOGENOM" id="CLU_026091_1_1_6"/>
<dbReference type="OrthoDB" id="6708821at2"/>
<dbReference type="Proteomes" id="UP000001485">
    <property type="component" value="Chromosome"/>
</dbReference>
<dbReference type="GO" id="GO:0031241">
    <property type="term" value="C:periplasmic side of cell outer membrane"/>
    <property type="evidence" value="ECO:0007669"/>
    <property type="project" value="UniProtKB-UniRule"/>
</dbReference>
<dbReference type="GO" id="GO:0030234">
    <property type="term" value="F:enzyme regulator activity"/>
    <property type="evidence" value="ECO:0007669"/>
    <property type="project" value="UniProtKB-UniRule"/>
</dbReference>
<dbReference type="GO" id="GO:0009252">
    <property type="term" value="P:peptidoglycan biosynthetic process"/>
    <property type="evidence" value="ECO:0007669"/>
    <property type="project" value="UniProtKB-UniRule"/>
</dbReference>
<dbReference type="GO" id="GO:0008360">
    <property type="term" value="P:regulation of cell shape"/>
    <property type="evidence" value="ECO:0007669"/>
    <property type="project" value="UniProtKB-KW"/>
</dbReference>
<dbReference type="CDD" id="cd06339">
    <property type="entry name" value="PBP1_YraM_LppC_lipoprotein-like"/>
    <property type="match status" value="1"/>
</dbReference>
<dbReference type="Gene3D" id="1.25.40.650">
    <property type="match status" value="1"/>
</dbReference>
<dbReference type="Gene3D" id="3.40.50.2300">
    <property type="match status" value="2"/>
</dbReference>
<dbReference type="Gene3D" id="1.25.40.10">
    <property type="entry name" value="Tetratricopeptide repeat domain"/>
    <property type="match status" value="1"/>
</dbReference>
<dbReference type="HAMAP" id="MF_01890">
    <property type="entry name" value="LpoA"/>
    <property type="match status" value="1"/>
</dbReference>
<dbReference type="InterPro" id="IPR007443">
    <property type="entry name" value="LpoA"/>
</dbReference>
<dbReference type="InterPro" id="IPR028082">
    <property type="entry name" value="Peripla_BP_I"/>
</dbReference>
<dbReference type="InterPro" id="IPR011990">
    <property type="entry name" value="TPR-like_helical_dom_sf"/>
</dbReference>
<dbReference type="PANTHER" id="PTHR38038">
    <property type="entry name" value="PENICILLIN-BINDING PROTEIN ACTIVATOR LPOA"/>
    <property type="match status" value="1"/>
</dbReference>
<dbReference type="PANTHER" id="PTHR38038:SF1">
    <property type="entry name" value="PENICILLIN-BINDING PROTEIN ACTIVATOR LPOA"/>
    <property type="match status" value="1"/>
</dbReference>
<dbReference type="Pfam" id="PF04348">
    <property type="entry name" value="LppC"/>
    <property type="match status" value="2"/>
</dbReference>
<dbReference type="SUPFAM" id="SSF53822">
    <property type="entry name" value="Periplasmic binding protein-like I"/>
    <property type="match status" value="1"/>
</dbReference>
<comment type="function">
    <text evidence="1">Regulator of peptidoglycan synthesis that is essential for the function of penicillin-binding protein 1A (PBP1a).</text>
</comment>
<comment type="subunit">
    <text evidence="1">Interacts with PBP1a.</text>
</comment>
<comment type="subcellular location">
    <subcellularLocation>
        <location evidence="1">Cell outer membrane</location>
        <topology evidence="1">Lipid-anchor</topology>
        <orientation evidence="1">Periplasmic side</orientation>
    </subcellularLocation>
</comment>
<comment type="similarity">
    <text evidence="1">Belongs to the LpoA family.</text>
</comment>
<gene>
    <name evidence="1" type="primary">lpoA</name>
    <name type="ordered locus">NT01EI_0614</name>
</gene>
<keyword id="KW-0998">Cell outer membrane</keyword>
<keyword id="KW-0133">Cell shape</keyword>
<keyword id="KW-0449">Lipoprotein</keyword>
<keyword id="KW-0472">Membrane</keyword>
<keyword id="KW-0564">Palmitate</keyword>
<keyword id="KW-0573">Peptidoglycan synthesis</keyword>
<keyword id="KW-0732">Signal</keyword>
<evidence type="ECO:0000255" key="1">
    <source>
        <dbReference type="HAMAP-Rule" id="MF_01890"/>
    </source>
</evidence>
<accession>C5B768</accession>
<reference key="1">
    <citation type="submission" date="2009-03" db="EMBL/GenBank/DDBJ databases">
        <title>Complete genome sequence of Edwardsiella ictaluri 93-146.</title>
        <authorList>
            <person name="Williams M.L."/>
            <person name="Gillaspy A.F."/>
            <person name="Dyer D.W."/>
            <person name="Thune R.L."/>
            <person name="Waldbieser G.C."/>
            <person name="Schuster S.C."/>
            <person name="Gipson J."/>
            <person name="Zaitshik J."/>
            <person name="Landry C."/>
            <person name="Lawrence M.L."/>
        </authorList>
    </citation>
    <scope>NUCLEOTIDE SEQUENCE [LARGE SCALE GENOMIC DNA]</scope>
    <source>
        <strain>93-146</strain>
    </source>
</reference>
<protein>
    <recommendedName>
        <fullName evidence="1">Penicillin-binding protein activator LpoA</fullName>
        <shortName evidence="1">PBP activator LpoA</shortName>
    </recommendedName>
</protein>
<feature type="signal peptide" evidence="1">
    <location>
        <begin position="1"/>
        <end position="26"/>
    </location>
</feature>
<feature type="chain" id="PRO_0000405928" description="Penicillin-binding protein activator LpoA">
    <location>
        <begin position="27"/>
        <end position="682"/>
    </location>
</feature>
<feature type="lipid moiety-binding region" description="N-palmitoyl cysteine" evidence="1">
    <location>
        <position position="27"/>
    </location>
</feature>
<feature type="lipid moiety-binding region" description="S-diacylglycerol cysteine" evidence="1">
    <location>
        <position position="27"/>
    </location>
</feature>